<keyword id="KW-0165">Cleavage on pair of basic residues</keyword>
<keyword id="KW-0217">Developmental protein</keyword>
<keyword id="KW-1015">Disulfide bond</keyword>
<keyword id="KW-0325">Glycoprotein</keyword>
<keyword id="KW-0339">Growth factor</keyword>
<keyword id="KW-0497">Mitogen</keyword>
<keyword id="KW-1185">Reference proteome</keyword>
<keyword id="KW-0964">Secreted</keyword>
<keyword id="KW-0732">Signal</keyword>
<sequence>MHRLIFVCTLVCANFCSCRDTSATPQSASIKALRNANLRRDESNHLTDLYRRDETIQVRGNGYVQSPRFPNSYPRNLLLTWRLHSQENTRIQLVFDNQFGLEEAENDICRYDFVEVEDISETSTIIRGRWCGHKEVPPRIKSRTNQIKITFKSDDYFVAKPGFKIYYSLLEDFQPAAASETNWESVTSSISGVSYNSPSVTDPTLIADALDKKIAEFDTVEDLLKYFNPESWQEDLENMYLDTPRYRGRSYHDRKSKVDLDRLNDDAKRYSCTPRNYSVNIREELKLANVVFFPRCLLVQRCGGNCGCGTVNWRSCTCNSGKTVKKYHEVLQFEPGHIKRRGRAKTMALVDIQLDHHERCDCICSSRPPR</sequence>
<accession>Q5RA73</accession>
<feature type="signal peptide" evidence="2">
    <location>
        <begin position="1"/>
        <end position="18"/>
    </location>
</feature>
<feature type="chain" id="PRO_0000250192" description="Platelet-derived growth factor D, latent form">
    <location>
        <begin position="19"/>
        <end position="370"/>
    </location>
</feature>
<feature type="chain" id="PRO_0000250193" description="Platelet-derived growth factor D, receptor-binding form" evidence="2">
    <location>
        <begin position="250"/>
        <end position="370"/>
    </location>
</feature>
<feature type="domain" description="CUB" evidence="3">
    <location>
        <begin position="52"/>
        <end position="170"/>
    </location>
</feature>
<feature type="site" description="Cleavage" evidence="2">
    <location>
        <begin position="247"/>
        <end position="248"/>
    </location>
</feature>
<feature type="site" description="Cleavage" evidence="2">
    <location>
        <begin position="249"/>
        <end position="250"/>
    </location>
</feature>
<feature type="glycosylation site" description="N-linked (GlcNAc...) asparagine" evidence="2">
    <location>
        <position position="276"/>
    </location>
</feature>
<feature type="disulfide bond" evidence="3">
    <location>
        <begin position="109"/>
        <end position="131"/>
    </location>
</feature>
<feature type="disulfide bond" description="Interchain" evidence="3">
    <location>
        <position position="296"/>
    </location>
</feature>
<feature type="disulfide bond" evidence="3">
    <location>
        <begin position="302"/>
        <end position="360"/>
    </location>
</feature>
<feature type="disulfide bond" evidence="3">
    <location>
        <begin position="306"/>
        <end position="362"/>
    </location>
</feature>
<dbReference type="EMBL" id="CR859146">
    <property type="protein sequence ID" value="CAH91337.1"/>
    <property type="molecule type" value="mRNA"/>
</dbReference>
<dbReference type="RefSeq" id="NP_001125790.1">
    <property type="nucleotide sequence ID" value="NM_001132318.2"/>
</dbReference>
<dbReference type="SMR" id="Q5RA73"/>
<dbReference type="FunCoup" id="Q5RA73">
    <property type="interactions" value="1152"/>
</dbReference>
<dbReference type="STRING" id="9601.ENSPPYP00000004370"/>
<dbReference type="GlyCosmos" id="Q5RA73">
    <property type="glycosylation" value="1 site, No reported glycans"/>
</dbReference>
<dbReference type="Ensembl" id="ENSPPYT00000004545.3">
    <property type="protein sequence ID" value="ENSPPYP00000004370.2"/>
    <property type="gene ID" value="ENSPPYG00000003821.3"/>
</dbReference>
<dbReference type="GeneID" id="100172718"/>
<dbReference type="KEGG" id="pon:100172718"/>
<dbReference type="CTD" id="80310"/>
<dbReference type="eggNOG" id="ENOG502QPQY">
    <property type="taxonomic scope" value="Eukaryota"/>
</dbReference>
<dbReference type="GeneTree" id="ENSGT00940000159575"/>
<dbReference type="HOGENOM" id="CLU_037859_1_0_1"/>
<dbReference type="InParanoid" id="Q5RA73"/>
<dbReference type="OMA" id="HHETCEC"/>
<dbReference type="OrthoDB" id="8641091at2759"/>
<dbReference type="TreeFam" id="TF332130"/>
<dbReference type="Proteomes" id="UP000001595">
    <property type="component" value="Chromosome 11"/>
</dbReference>
<dbReference type="GO" id="GO:0005615">
    <property type="term" value="C:extracellular space"/>
    <property type="evidence" value="ECO:0007669"/>
    <property type="project" value="TreeGrafter"/>
</dbReference>
<dbReference type="GO" id="GO:0016020">
    <property type="term" value="C:membrane"/>
    <property type="evidence" value="ECO:0007669"/>
    <property type="project" value="InterPro"/>
</dbReference>
<dbReference type="GO" id="GO:0008083">
    <property type="term" value="F:growth factor activity"/>
    <property type="evidence" value="ECO:0007669"/>
    <property type="project" value="UniProtKB-KW"/>
</dbReference>
<dbReference type="GO" id="GO:0005161">
    <property type="term" value="F:platelet-derived growth factor receptor binding"/>
    <property type="evidence" value="ECO:0007669"/>
    <property type="project" value="TreeGrafter"/>
</dbReference>
<dbReference type="GO" id="GO:0071230">
    <property type="term" value="P:cellular response to amino acid stimulus"/>
    <property type="evidence" value="ECO:0007669"/>
    <property type="project" value="Ensembl"/>
</dbReference>
<dbReference type="GO" id="GO:0048008">
    <property type="term" value="P:platelet-derived growth factor receptor signaling pathway"/>
    <property type="evidence" value="ECO:0007669"/>
    <property type="project" value="TreeGrafter"/>
</dbReference>
<dbReference type="GO" id="GO:0051781">
    <property type="term" value="P:positive regulation of cell division"/>
    <property type="evidence" value="ECO:0007669"/>
    <property type="project" value="UniProtKB-KW"/>
</dbReference>
<dbReference type="GO" id="GO:0030335">
    <property type="term" value="P:positive regulation of cell migration"/>
    <property type="evidence" value="ECO:0007669"/>
    <property type="project" value="TreeGrafter"/>
</dbReference>
<dbReference type="GO" id="GO:0008284">
    <property type="term" value="P:positive regulation of cell population proliferation"/>
    <property type="evidence" value="ECO:0007669"/>
    <property type="project" value="TreeGrafter"/>
</dbReference>
<dbReference type="GO" id="GO:0070374">
    <property type="term" value="P:positive regulation of ERK1 and ERK2 cascade"/>
    <property type="evidence" value="ECO:0007669"/>
    <property type="project" value="TreeGrafter"/>
</dbReference>
<dbReference type="GO" id="GO:0051897">
    <property type="term" value="P:positive regulation of phosphatidylinositol 3-kinase/protein kinase B signal transduction"/>
    <property type="evidence" value="ECO:0007669"/>
    <property type="project" value="TreeGrafter"/>
</dbReference>
<dbReference type="CDD" id="cd00041">
    <property type="entry name" value="CUB"/>
    <property type="match status" value="1"/>
</dbReference>
<dbReference type="CDD" id="cd00135">
    <property type="entry name" value="PDGF"/>
    <property type="match status" value="1"/>
</dbReference>
<dbReference type="FunFam" id="2.10.90.10:FF:000010">
    <property type="entry name" value="Platelet derived growth factor C"/>
    <property type="match status" value="1"/>
</dbReference>
<dbReference type="FunFam" id="2.60.120.290:FF:000017">
    <property type="entry name" value="Platelet derived growth factor C"/>
    <property type="match status" value="1"/>
</dbReference>
<dbReference type="Gene3D" id="2.10.90.10">
    <property type="entry name" value="Cystine-knot cytokines"/>
    <property type="match status" value="1"/>
</dbReference>
<dbReference type="Gene3D" id="2.60.120.290">
    <property type="entry name" value="Spermadhesin, CUB domain"/>
    <property type="match status" value="1"/>
</dbReference>
<dbReference type="InterPro" id="IPR000859">
    <property type="entry name" value="CUB_dom"/>
</dbReference>
<dbReference type="InterPro" id="IPR029034">
    <property type="entry name" value="Cystine-knot_cytokine"/>
</dbReference>
<dbReference type="InterPro" id="IPR000072">
    <property type="entry name" value="PDGF/VEGF_dom"/>
</dbReference>
<dbReference type="InterPro" id="IPR035914">
    <property type="entry name" value="Sperma_CUB_dom_sf"/>
</dbReference>
<dbReference type="PANTHER" id="PTHR11633">
    <property type="entry name" value="PLATELET-DERIVED GROWTH FACTOR"/>
    <property type="match status" value="1"/>
</dbReference>
<dbReference type="PANTHER" id="PTHR11633:SF4">
    <property type="entry name" value="PLATELET-DERIVED GROWTH FACTOR D"/>
    <property type="match status" value="1"/>
</dbReference>
<dbReference type="Pfam" id="PF00431">
    <property type="entry name" value="CUB"/>
    <property type="match status" value="1"/>
</dbReference>
<dbReference type="Pfam" id="PF00341">
    <property type="entry name" value="PDGF"/>
    <property type="match status" value="1"/>
</dbReference>
<dbReference type="SMART" id="SM00042">
    <property type="entry name" value="CUB"/>
    <property type="match status" value="1"/>
</dbReference>
<dbReference type="SUPFAM" id="SSF57501">
    <property type="entry name" value="Cystine-knot cytokines"/>
    <property type="match status" value="1"/>
</dbReference>
<dbReference type="SUPFAM" id="SSF49854">
    <property type="entry name" value="Spermadhesin, CUB domain"/>
    <property type="match status" value="1"/>
</dbReference>
<dbReference type="PROSITE" id="PS01180">
    <property type="entry name" value="CUB"/>
    <property type="match status" value="1"/>
</dbReference>
<dbReference type="PROSITE" id="PS50278">
    <property type="entry name" value="PDGF_2"/>
    <property type="match status" value="1"/>
</dbReference>
<comment type="function">
    <text evidence="1">Growth factor that plays an essential role in the regulation of embryonic development, cell proliferation, cell migration, survival and chemotaxis. Potent mitogen for cells of mesenchymal origin. Plays an important role in wound healing. Induces macrophage recruitment, increased interstitial pressure, and blood vessel maturation during angiogenesis. Can initiate events that lead to a mesangial proliferative glomerulonephritis, including influx of monocytes and macrophages and production of extracellular matrix (By similarity).</text>
</comment>
<comment type="subunit">
    <text evidence="1">Homodimer; disulfide-linked. Interacts with PDGFRB homodimers, and with heterodimers formed by PDGFRA and PDGFRB (By similarity).</text>
</comment>
<comment type="subcellular location">
    <subcellularLocation>
        <location evidence="1">Secreted</location>
    </subcellularLocation>
    <text evidence="1">Released by platelets upon wounding.</text>
</comment>
<comment type="PTM">
    <text evidence="1">Activated by proteolytic cleavage. Proteolytic removal of the N-terminal CUB domain releasing the core domain is necessary for unmasking the receptor-binding epitopes of the core domain. Cleavage after Arg-247 or Arg-249 by urokinase plasminogen activator gives rise to the active form (By similarity).</text>
</comment>
<comment type="similarity">
    <text evidence="4">Belongs to the PDGF/VEGF growth factor family.</text>
</comment>
<protein>
    <recommendedName>
        <fullName>Platelet-derived growth factor D</fullName>
        <shortName>PDGF-D</shortName>
    </recommendedName>
    <component>
        <recommendedName>
            <fullName>Platelet-derived growth factor D, latent form</fullName>
            <shortName>PDGFD latent form</shortName>
        </recommendedName>
    </component>
    <component>
        <recommendedName>
            <fullName>Platelet-derived growth factor D, receptor-binding form</fullName>
            <shortName>PDGFD receptor-binding form</shortName>
        </recommendedName>
    </component>
</protein>
<evidence type="ECO:0000250" key="1"/>
<evidence type="ECO:0000255" key="2"/>
<evidence type="ECO:0000255" key="3">
    <source>
        <dbReference type="PROSITE-ProRule" id="PRU00059"/>
    </source>
</evidence>
<evidence type="ECO:0000305" key="4"/>
<proteinExistence type="evidence at transcript level"/>
<name>PDGFD_PONAB</name>
<reference key="1">
    <citation type="submission" date="2004-11" db="EMBL/GenBank/DDBJ databases">
        <authorList>
            <consortium name="The German cDNA consortium"/>
        </authorList>
    </citation>
    <scope>NUCLEOTIDE SEQUENCE [LARGE SCALE MRNA]</scope>
    <source>
        <tissue>Kidney</tissue>
    </source>
</reference>
<gene>
    <name type="primary">PDGFD</name>
</gene>
<organism>
    <name type="scientific">Pongo abelii</name>
    <name type="common">Sumatran orangutan</name>
    <name type="synonym">Pongo pygmaeus abelii</name>
    <dbReference type="NCBI Taxonomy" id="9601"/>
    <lineage>
        <taxon>Eukaryota</taxon>
        <taxon>Metazoa</taxon>
        <taxon>Chordata</taxon>
        <taxon>Craniata</taxon>
        <taxon>Vertebrata</taxon>
        <taxon>Euteleostomi</taxon>
        <taxon>Mammalia</taxon>
        <taxon>Eutheria</taxon>
        <taxon>Euarchontoglires</taxon>
        <taxon>Primates</taxon>
        <taxon>Haplorrhini</taxon>
        <taxon>Catarrhini</taxon>
        <taxon>Hominidae</taxon>
        <taxon>Pongo</taxon>
    </lineage>
</organism>